<dbReference type="EMBL" id="CP000127">
    <property type="protein sequence ID" value="ABA56672.1"/>
    <property type="molecule type" value="Genomic_DNA"/>
</dbReference>
<dbReference type="RefSeq" id="WP_002812171.1">
    <property type="nucleotide sequence ID" value="NC_007484.1"/>
</dbReference>
<dbReference type="SMR" id="Q3JES4"/>
<dbReference type="FunCoup" id="Q3JES4">
    <property type="interactions" value="250"/>
</dbReference>
<dbReference type="STRING" id="323261.Noc_0139"/>
<dbReference type="KEGG" id="noc:Noc_0139"/>
<dbReference type="eggNOG" id="COG0632">
    <property type="taxonomic scope" value="Bacteria"/>
</dbReference>
<dbReference type="HOGENOM" id="CLU_087936_0_0_6"/>
<dbReference type="InParanoid" id="Q3JES4"/>
<dbReference type="Proteomes" id="UP000006838">
    <property type="component" value="Chromosome"/>
</dbReference>
<dbReference type="GO" id="GO:0005737">
    <property type="term" value="C:cytoplasm"/>
    <property type="evidence" value="ECO:0007669"/>
    <property type="project" value="UniProtKB-SubCell"/>
</dbReference>
<dbReference type="GO" id="GO:0009379">
    <property type="term" value="C:Holliday junction helicase complex"/>
    <property type="evidence" value="ECO:0007669"/>
    <property type="project" value="InterPro"/>
</dbReference>
<dbReference type="GO" id="GO:0048476">
    <property type="term" value="C:Holliday junction resolvase complex"/>
    <property type="evidence" value="ECO:0007669"/>
    <property type="project" value="UniProtKB-UniRule"/>
</dbReference>
<dbReference type="GO" id="GO:0005524">
    <property type="term" value="F:ATP binding"/>
    <property type="evidence" value="ECO:0007669"/>
    <property type="project" value="InterPro"/>
</dbReference>
<dbReference type="GO" id="GO:0000400">
    <property type="term" value="F:four-way junction DNA binding"/>
    <property type="evidence" value="ECO:0007669"/>
    <property type="project" value="UniProtKB-UniRule"/>
</dbReference>
<dbReference type="GO" id="GO:0009378">
    <property type="term" value="F:four-way junction helicase activity"/>
    <property type="evidence" value="ECO:0007669"/>
    <property type="project" value="InterPro"/>
</dbReference>
<dbReference type="GO" id="GO:0006310">
    <property type="term" value="P:DNA recombination"/>
    <property type="evidence" value="ECO:0007669"/>
    <property type="project" value="UniProtKB-UniRule"/>
</dbReference>
<dbReference type="GO" id="GO:0006281">
    <property type="term" value="P:DNA repair"/>
    <property type="evidence" value="ECO:0007669"/>
    <property type="project" value="UniProtKB-UniRule"/>
</dbReference>
<dbReference type="CDD" id="cd14332">
    <property type="entry name" value="UBA_RuvA_C"/>
    <property type="match status" value="1"/>
</dbReference>
<dbReference type="Gene3D" id="1.10.150.20">
    <property type="entry name" value="5' to 3' exonuclease, C-terminal subdomain"/>
    <property type="match status" value="1"/>
</dbReference>
<dbReference type="Gene3D" id="1.10.8.10">
    <property type="entry name" value="DNA helicase RuvA subunit, C-terminal domain"/>
    <property type="match status" value="1"/>
</dbReference>
<dbReference type="Gene3D" id="2.40.50.140">
    <property type="entry name" value="Nucleic acid-binding proteins"/>
    <property type="match status" value="1"/>
</dbReference>
<dbReference type="HAMAP" id="MF_00031">
    <property type="entry name" value="DNA_HJ_migration_RuvA"/>
    <property type="match status" value="1"/>
</dbReference>
<dbReference type="InterPro" id="IPR013849">
    <property type="entry name" value="DNA_helicase_Holl-junc_RuvA_I"/>
</dbReference>
<dbReference type="InterPro" id="IPR003583">
    <property type="entry name" value="Hlx-hairpin-Hlx_DNA-bd_motif"/>
</dbReference>
<dbReference type="InterPro" id="IPR012340">
    <property type="entry name" value="NA-bd_OB-fold"/>
</dbReference>
<dbReference type="InterPro" id="IPR000085">
    <property type="entry name" value="RuvA"/>
</dbReference>
<dbReference type="InterPro" id="IPR010994">
    <property type="entry name" value="RuvA_2-like"/>
</dbReference>
<dbReference type="InterPro" id="IPR011114">
    <property type="entry name" value="RuvA_C"/>
</dbReference>
<dbReference type="InterPro" id="IPR036267">
    <property type="entry name" value="RuvA_C_sf"/>
</dbReference>
<dbReference type="NCBIfam" id="TIGR00084">
    <property type="entry name" value="ruvA"/>
    <property type="match status" value="1"/>
</dbReference>
<dbReference type="Pfam" id="PF14520">
    <property type="entry name" value="HHH_5"/>
    <property type="match status" value="1"/>
</dbReference>
<dbReference type="Pfam" id="PF07499">
    <property type="entry name" value="RuvA_C"/>
    <property type="match status" value="1"/>
</dbReference>
<dbReference type="Pfam" id="PF01330">
    <property type="entry name" value="RuvA_N"/>
    <property type="match status" value="1"/>
</dbReference>
<dbReference type="SMART" id="SM00278">
    <property type="entry name" value="HhH1"/>
    <property type="match status" value="2"/>
</dbReference>
<dbReference type="SUPFAM" id="SSF46929">
    <property type="entry name" value="DNA helicase RuvA subunit, C-terminal domain"/>
    <property type="match status" value="1"/>
</dbReference>
<dbReference type="SUPFAM" id="SSF50249">
    <property type="entry name" value="Nucleic acid-binding proteins"/>
    <property type="match status" value="1"/>
</dbReference>
<dbReference type="SUPFAM" id="SSF47781">
    <property type="entry name" value="RuvA domain 2-like"/>
    <property type="match status" value="1"/>
</dbReference>
<gene>
    <name evidence="1" type="primary">ruvA</name>
    <name type="ordered locus">Noc_0139</name>
</gene>
<comment type="function">
    <text evidence="1">The RuvA-RuvB-RuvC complex processes Holliday junction (HJ) DNA during genetic recombination and DNA repair, while the RuvA-RuvB complex plays an important role in the rescue of blocked DNA replication forks via replication fork reversal (RFR). RuvA specifically binds to HJ cruciform DNA, conferring on it an open structure. The RuvB hexamer acts as an ATP-dependent pump, pulling dsDNA into and through the RuvAB complex. HJ branch migration allows RuvC to scan DNA until it finds its consensus sequence, where it cleaves and resolves the cruciform DNA.</text>
</comment>
<comment type="subunit">
    <text evidence="1">Homotetramer. Forms an RuvA(8)-RuvB(12)-Holliday junction (HJ) complex. HJ DNA is sandwiched between 2 RuvA tetramers; dsDNA enters through RuvA and exits via RuvB. An RuvB hexamer assembles on each DNA strand where it exits the tetramer. Each RuvB hexamer is contacted by two RuvA subunits (via domain III) on 2 adjacent RuvB subunits; this complex drives branch migration. In the full resolvosome a probable DNA-RuvA(4)-RuvB(12)-RuvC(2) complex forms which resolves the HJ.</text>
</comment>
<comment type="subcellular location">
    <subcellularLocation>
        <location evidence="1">Cytoplasm</location>
    </subcellularLocation>
</comment>
<comment type="domain">
    <text evidence="1">Has three domains with a flexible linker between the domains II and III and assumes an 'L' shape. Domain III is highly mobile and contacts RuvB.</text>
</comment>
<comment type="similarity">
    <text evidence="1">Belongs to the RuvA family.</text>
</comment>
<keyword id="KW-0963">Cytoplasm</keyword>
<keyword id="KW-0227">DNA damage</keyword>
<keyword id="KW-0233">DNA recombination</keyword>
<keyword id="KW-0234">DNA repair</keyword>
<keyword id="KW-0238">DNA-binding</keyword>
<keyword id="KW-1185">Reference proteome</keyword>
<organism>
    <name type="scientific">Nitrosococcus oceani (strain ATCC 19707 / BCRC 17464 / JCM 30415 / NCIMB 11848 / C-107)</name>
    <dbReference type="NCBI Taxonomy" id="323261"/>
    <lineage>
        <taxon>Bacteria</taxon>
        <taxon>Pseudomonadati</taxon>
        <taxon>Pseudomonadota</taxon>
        <taxon>Gammaproteobacteria</taxon>
        <taxon>Chromatiales</taxon>
        <taxon>Chromatiaceae</taxon>
        <taxon>Nitrosococcus</taxon>
    </lineage>
</organism>
<sequence>MIGRLRGILLEKRAPFLLLDVQGVGYELEAPLSTFYVLPAMGAEVILYTHLVVRDDAHLLYAFASEKERGLFRSLIRVNGVGAKLGLGILSGIEAESFTRCVQEGDTVSLTRLPGVGKKTAERLIVEMRDRLLDMPESGVAGMRPDRVDGSAPGTVAEAVSALVALGYKPNEASRAVRRLDTEALTTEEIIRQALQRML</sequence>
<evidence type="ECO:0000255" key="1">
    <source>
        <dbReference type="HAMAP-Rule" id="MF_00031"/>
    </source>
</evidence>
<accession>Q3JES4</accession>
<reference key="1">
    <citation type="journal article" date="2006" name="Appl. Environ. Microbiol.">
        <title>Complete genome sequence of the marine, chemolithoautotrophic, ammonia-oxidizing bacterium Nitrosococcus oceani ATCC 19707.</title>
        <authorList>
            <person name="Klotz M.G."/>
            <person name="Arp D.J."/>
            <person name="Chain P.S.G."/>
            <person name="El-Sheikh A.F."/>
            <person name="Hauser L.J."/>
            <person name="Hommes N.G."/>
            <person name="Larimer F.W."/>
            <person name="Malfatti S.A."/>
            <person name="Norton J.M."/>
            <person name="Poret-Peterson A.T."/>
            <person name="Vergez L.M."/>
            <person name="Ward B.B."/>
        </authorList>
    </citation>
    <scope>NUCLEOTIDE SEQUENCE [LARGE SCALE GENOMIC DNA]</scope>
    <source>
        <strain>ATCC 19707 / BCRC 17464 / JCM 30415 / NCIMB 11848 / C-107</strain>
    </source>
</reference>
<proteinExistence type="inferred from homology"/>
<name>RUVA_NITOC</name>
<feature type="chain" id="PRO_0000224886" description="Holliday junction branch migration complex subunit RuvA">
    <location>
        <begin position="1"/>
        <end position="199"/>
    </location>
</feature>
<feature type="region of interest" description="Domain I" evidence="1">
    <location>
        <begin position="1"/>
        <end position="64"/>
    </location>
</feature>
<feature type="region of interest" description="Domain II" evidence="1">
    <location>
        <begin position="65"/>
        <end position="143"/>
    </location>
</feature>
<feature type="region of interest" description="Flexible linker" evidence="1">
    <location>
        <begin position="144"/>
        <end position="150"/>
    </location>
</feature>
<feature type="region of interest" description="Domain III" evidence="1">
    <location>
        <begin position="151"/>
        <end position="199"/>
    </location>
</feature>
<protein>
    <recommendedName>
        <fullName evidence="1">Holliday junction branch migration complex subunit RuvA</fullName>
    </recommendedName>
</protein>